<organism>
    <name type="scientific">Yarrowia lipolytica (strain CLIB 122 / E 150)</name>
    <name type="common">Yeast</name>
    <name type="synonym">Candida lipolytica</name>
    <dbReference type="NCBI Taxonomy" id="284591"/>
    <lineage>
        <taxon>Eukaryota</taxon>
        <taxon>Fungi</taxon>
        <taxon>Dikarya</taxon>
        <taxon>Ascomycota</taxon>
        <taxon>Saccharomycotina</taxon>
        <taxon>Dipodascomycetes</taxon>
        <taxon>Dipodascales</taxon>
        <taxon>Dipodascales incertae sedis</taxon>
        <taxon>Yarrowia</taxon>
    </lineage>
</organism>
<reference key="1">
    <citation type="journal article" date="2004" name="Nature">
        <title>Genome evolution in yeasts.</title>
        <authorList>
            <person name="Dujon B."/>
            <person name="Sherman D."/>
            <person name="Fischer G."/>
            <person name="Durrens P."/>
            <person name="Casaregola S."/>
            <person name="Lafontaine I."/>
            <person name="de Montigny J."/>
            <person name="Marck C."/>
            <person name="Neuveglise C."/>
            <person name="Talla E."/>
            <person name="Goffard N."/>
            <person name="Frangeul L."/>
            <person name="Aigle M."/>
            <person name="Anthouard V."/>
            <person name="Babour A."/>
            <person name="Barbe V."/>
            <person name="Barnay S."/>
            <person name="Blanchin S."/>
            <person name="Beckerich J.-M."/>
            <person name="Beyne E."/>
            <person name="Bleykasten C."/>
            <person name="Boisrame A."/>
            <person name="Boyer J."/>
            <person name="Cattolico L."/>
            <person name="Confanioleri F."/>
            <person name="de Daruvar A."/>
            <person name="Despons L."/>
            <person name="Fabre E."/>
            <person name="Fairhead C."/>
            <person name="Ferry-Dumazet H."/>
            <person name="Groppi A."/>
            <person name="Hantraye F."/>
            <person name="Hennequin C."/>
            <person name="Jauniaux N."/>
            <person name="Joyet P."/>
            <person name="Kachouri R."/>
            <person name="Kerrest A."/>
            <person name="Koszul R."/>
            <person name="Lemaire M."/>
            <person name="Lesur I."/>
            <person name="Ma L."/>
            <person name="Muller H."/>
            <person name="Nicaud J.-M."/>
            <person name="Nikolski M."/>
            <person name="Oztas S."/>
            <person name="Ozier-Kalogeropoulos O."/>
            <person name="Pellenz S."/>
            <person name="Potier S."/>
            <person name="Richard G.-F."/>
            <person name="Straub M.-L."/>
            <person name="Suleau A."/>
            <person name="Swennen D."/>
            <person name="Tekaia F."/>
            <person name="Wesolowski-Louvel M."/>
            <person name="Westhof E."/>
            <person name="Wirth B."/>
            <person name="Zeniou-Meyer M."/>
            <person name="Zivanovic Y."/>
            <person name="Bolotin-Fukuhara M."/>
            <person name="Thierry A."/>
            <person name="Bouchier C."/>
            <person name="Caudron B."/>
            <person name="Scarpelli C."/>
            <person name="Gaillardin C."/>
            <person name="Weissenbach J."/>
            <person name="Wincker P."/>
            <person name="Souciet J.-L."/>
        </authorList>
    </citation>
    <scope>NUCLEOTIDE SEQUENCE [LARGE SCALE GENOMIC DNA]</scope>
    <source>
        <strain>CLIB 122 / E 150</strain>
    </source>
</reference>
<accession>Q6CEY7</accession>
<feature type="chain" id="PRO_0000246643" description="Probable kinetochore protein NDC80">
    <location>
        <begin position="1"/>
        <end position="631"/>
    </location>
</feature>
<feature type="region of interest" description="Disordered" evidence="3">
    <location>
        <begin position="1"/>
        <end position="84"/>
    </location>
</feature>
<feature type="coiled-coil region" evidence="2">
    <location>
        <begin position="321"/>
        <end position="387"/>
    </location>
</feature>
<feature type="coiled-coil region" evidence="2">
    <location>
        <begin position="473"/>
        <end position="592"/>
    </location>
</feature>
<feature type="compositionally biased region" description="Basic residues" evidence="3">
    <location>
        <begin position="1"/>
        <end position="10"/>
    </location>
</feature>
<proteinExistence type="inferred from homology"/>
<protein>
    <recommendedName>
        <fullName>Probable kinetochore protein NDC80</fullName>
    </recommendedName>
</protein>
<sequence length="631" mass="72294">MNASAHKKRLSMMPGTSSASRPSMAGLPQRNNPPPQREPATPAVSELMRSSRRSMAFGRNPRQSSFGLVPQTPMAPMHTRDPRPVRDRHYQQQISQQIYEYLVTNHFEQETRHPLNQRTLSNPTQKDFKTMFEWIFRRIDPGYPFHKSIENEVHAVLRAAKYPWLDSITKSQIVAVGGQSWAYFSGMLHWMVELNTTIEKYHNHDYSGDDGPSLVDEIFNRHARESYFAYLQGDDRFARPDAELCLAEENAEFQEILAEQRAQNPLPEGEDDELDEELSRLEAKWGKIEEAKLLGKNLADDIVKLGAFVDARKEHNARYASQMSQATAEEDNVTSEVESLSRQKLKLQQTIQDQGLSPAELDKLHLDMERQQKALNSLDEIIDEGRQVVSNKESTALAVFDALDRVIKEYTSSVLSYNAWVASDNDLPEIPESVYLIDLREPLSEENLGRHPSVILGGVDPRNQIRPEIVRICNMVTSKVKALQEEALRLQEEIETNQEKLVSQKRHIGELEAKSRRLRETRNALEDSASMNENENSQNTERLENQFVQAQSETALAQSQLKGLQVRLQDAEHERNKLSVEVQQARERLSQDILKQAEVMVAFKAMVQTKLQDFEMFVRANVEEEIRGDHN</sequence>
<evidence type="ECO:0000250" key="1"/>
<evidence type="ECO:0000255" key="2"/>
<evidence type="ECO:0000256" key="3">
    <source>
        <dbReference type="SAM" id="MobiDB-lite"/>
    </source>
</evidence>
<evidence type="ECO:0000305" key="4"/>
<dbReference type="EMBL" id="CR382128">
    <property type="protein sequence ID" value="CAG83025.1"/>
    <property type="molecule type" value="Genomic_DNA"/>
</dbReference>
<dbReference type="RefSeq" id="XP_500775.1">
    <property type="nucleotide sequence ID" value="XM_500775.1"/>
</dbReference>
<dbReference type="SMR" id="Q6CEY7"/>
<dbReference type="FunCoup" id="Q6CEY7">
    <property type="interactions" value="284"/>
</dbReference>
<dbReference type="STRING" id="284591.Q6CEY7"/>
<dbReference type="EnsemblFungi" id="CAG83025">
    <property type="protein sequence ID" value="CAG83025"/>
    <property type="gene ID" value="YALI0_B11814g"/>
</dbReference>
<dbReference type="KEGG" id="yli:2907301"/>
<dbReference type="VEuPathDB" id="FungiDB:YALI0_B11814g"/>
<dbReference type="HOGENOM" id="CLU_012583_1_0_1"/>
<dbReference type="InParanoid" id="Q6CEY7"/>
<dbReference type="OMA" id="PSHKFQK"/>
<dbReference type="OrthoDB" id="24030at4891"/>
<dbReference type="Proteomes" id="UP000001300">
    <property type="component" value="Chromosome B"/>
</dbReference>
<dbReference type="GO" id="GO:0031262">
    <property type="term" value="C:Ndc80 complex"/>
    <property type="evidence" value="ECO:0000250"/>
    <property type="project" value="UniProtKB"/>
</dbReference>
<dbReference type="GO" id="GO:0005634">
    <property type="term" value="C:nucleus"/>
    <property type="evidence" value="ECO:0007669"/>
    <property type="project" value="UniProtKB-SubCell"/>
</dbReference>
<dbReference type="GO" id="GO:0008017">
    <property type="term" value="F:microtubule binding"/>
    <property type="evidence" value="ECO:0000250"/>
    <property type="project" value="UniProtKB"/>
</dbReference>
<dbReference type="GO" id="GO:0051315">
    <property type="term" value="P:attachment of mitotic spindle microtubules to kinetochore"/>
    <property type="evidence" value="ECO:0000318"/>
    <property type="project" value="GO_Central"/>
</dbReference>
<dbReference type="GO" id="GO:0051301">
    <property type="term" value="P:cell division"/>
    <property type="evidence" value="ECO:0007669"/>
    <property type="project" value="UniProtKB-KW"/>
</dbReference>
<dbReference type="GO" id="GO:1990758">
    <property type="term" value="P:mitotic sister chromatid biorientation"/>
    <property type="evidence" value="ECO:0000250"/>
    <property type="project" value="UniProtKB"/>
</dbReference>
<dbReference type="FunFam" id="1.10.418.30:FF:000001">
    <property type="entry name" value="Probable kinetochore protein ndc80"/>
    <property type="match status" value="1"/>
</dbReference>
<dbReference type="Gene3D" id="1.10.418.30">
    <property type="entry name" value="Ncd80 complex, Ncd80 subunit"/>
    <property type="match status" value="1"/>
</dbReference>
<dbReference type="InterPro" id="IPR005550">
    <property type="entry name" value="Kinetochore_Ndc80"/>
</dbReference>
<dbReference type="InterPro" id="IPR055260">
    <property type="entry name" value="Ndc80_CH"/>
</dbReference>
<dbReference type="InterPro" id="IPR038273">
    <property type="entry name" value="Ndc80_sf"/>
</dbReference>
<dbReference type="PANTHER" id="PTHR10643">
    <property type="entry name" value="KINETOCHORE PROTEIN NDC80"/>
    <property type="match status" value="1"/>
</dbReference>
<dbReference type="PANTHER" id="PTHR10643:SF2">
    <property type="entry name" value="KINETOCHORE PROTEIN NDC80 HOMOLOG"/>
    <property type="match status" value="1"/>
</dbReference>
<dbReference type="Pfam" id="PF03801">
    <property type="entry name" value="Ndc80_HEC"/>
    <property type="match status" value="1"/>
</dbReference>
<gene>
    <name type="primary">NDC80</name>
    <name type="ordered locus">YALI0B11814g</name>
</gene>
<keyword id="KW-0131">Cell cycle</keyword>
<keyword id="KW-0132">Cell division</keyword>
<keyword id="KW-0137">Centromere</keyword>
<keyword id="KW-0158">Chromosome</keyword>
<keyword id="KW-0175">Coiled coil</keyword>
<keyword id="KW-0995">Kinetochore</keyword>
<keyword id="KW-0498">Mitosis</keyword>
<keyword id="KW-0539">Nucleus</keyword>
<keyword id="KW-1185">Reference proteome</keyword>
<comment type="function">
    <text evidence="1">Acts as a component of the essential kinetochore-associated NDC80 complex, which is required for chromosome segregation and spindle checkpoint activity.</text>
</comment>
<comment type="subunit">
    <text evidence="1">Component of the NDC80 complex, which consists of NDC80, NUF2, SPC24 and SPC25.</text>
</comment>
<comment type="subcellular location">
    <subcellularLocation>
        <location evidence="1">Nucleus</location>
    </subcellularLocation>
    <subcellularLocation>
        <location evidence="1">Chromosome</location>
        <location evidence="1">Centromere</location>
        <location evidence="1">Kinetochore</location>
    </subcellularLocation>
    <text evidence="1">Associated with kinetochores.</text>
</comment>
<comment type="similarity">
    <text evidence="4">Belongs to the NDC80/HEC1 family.</text>
</comment>
<name>NDC80_YARLI</name>